<name>HTPX_PYRAE</name>
<evidence type="ECO:0000255" key="1">
    <source>
        <dbReference type="HAMAP-Rule" id="MF_00188"/>
    </source>
</evidence>
<comment type="cofactor">
    <cofactor evidence="1">
        <name>Zn(2+)</name>
        <dbReference type="ChEBI" id="CHEBI:29105"/>
    </cofactor>
    <text evidence="1">Binds 1 zinc ion per subunit.</text>
</comment>
<comment type="subcellular location">
    <subcellularLocation>
        <location evidence="1">Cell membrane</location>
        <topology evidence="1">Multi-pass membrane protein</topology>
    </subcellularLocation>
</comment>
<comment type="similarity">
    <text evidence="1">Belongs to the peptidase M48B family.</text>
</comment>
<feature type="chain" id="PRO_0000138924" description="Protease HtpX homolog">
    <location>
        <begin position="1"/>
        <end position="347"/>
    </location>
</feature>
<feature type="transmembrane region" description="Helical" evidence="1">
    <location>
        <begin position="8"/>
        <end position="28"/>
    </location>
</feature>
<feature type="transmembrane region" description="Helical" evidence="1">
    <location>
        <begin position="44"/>
        <end position="64"/>
    </location>
</feature>
<feature type="transmembrane region" description="Helical" evidence="1">
    <location>
        <begin position="76"/>
        <end position="96"/>
    </location>
</feature>
<feature type="transmembrane region" description="Helical" evidence="1">
    <location>
        <begin position="141"/>
        <end position="163"/>
    </location>
</feature>
<feature type="transmembrane region" description="Helical" evidence="1">
    <location>
        <begin position="185"/>
        <end position="205"/>
    </location>
</feature>
<feature type="transmembrane region" description="Helical" evidence="1">
    <location>
        <begin position="221"/>
        <end position="241"/>
    </location>
</feature>
<feature type="active site" evidence="1">
    <location>
        <position position="175"/>
    </location>
</feature>
<feature type="binding site" evidence="1">
    <location>
        <position position="174"/>
    </location>
    <ligand>
        <name>Zn(2+)</name>
        <dbReference type="ChEBI" id="CHEBI:29105"/>
        <note>catalytic</note>
    </ligand>
</feature>
<feature type="binding site" evidence="1">
    <location>
        <position position="178"/>
    </location>
    <ligand>
        <name>Zn(2+)</name>
        <dbReference type="ChEBI" id="CHEBI:29105"/>
        <note>catalytic</note>
    </ligand>
</feature>
<feature type="binding site" evidence="1">
    <location>
        <position position="248"/>
    </location>
    <ligand>
        <name>Zn(2+)</name>
        <dbReference type="ChEBI" id="CHEBI:29105"/>
        <note>catalytic</note>
    </ligand>
</feature>
<dbReference type="EC" id="3.4.24.-" evidence="1"/>
<dbReference type="EMBL" id="AE009441">
    <property type="protein sequence ID" value="AAL64933.1"/>
    <property type="molecule type" value="Genomic_DNA"/>
</dbReference>
<dbReference type="RefSeq" id="WP_011009400.1">
    <property type="nucleotide sequence ID" value="NC_003364.1"/>
</dbReference>
<dbReference type="FunCoup" id="Q8ZT30">
    <property type="interactions" value="69"/>
</dbReference>
<dbReference type="STRING" id="178306.PAE3461"/>
<dbReference type="EnsemblBacteria" id="AAL64933">
    <property type="protein sequence ID" value="AAL64933"/>
    <property type="gene ID" value="PAE3461"/>
</dbReference>
<dbReference type="GeneID" id="1466063"/>
<dbReference type="KEGG" id="pai:PAE3461"/>
<dbReference type="PATRIC" id="fig|178306.9.peg.2605"/>
<dbReference type="eggNOG" id="arCOG01331">
    <property type="taxonomic scope" value="Archaea"/>
</dbReference>
<dbReference type="HOGENOM" id="CLU_042266_4_2_2"/>
<dbReference type="InParanoid" id="Q8ZT30"/>
<dbReference type="Proteomes" id="UP000002439">
    <property type="component" value="Chromosome"/>
</dbReference>
<dbReference type="GO" id="GO:0005886">
    <property type="term" value="C:plasma membrane"/>
    <property type="evidence" value="ECO:0007669"/>
    <property type="project" value="UniProtKB-SubCell"/>
</dbReference>
<dbReference type="GO" id="GO:0004222">
    <property type="term" value="F:metalloendopeptidase activity"/>
    <property type="evidence" value="ECO:0007669"/>
    <property type="project" value="UniProtKB-UniRule"/>
</dbReference>
<dbReference type="GO" id="GO:0008270">
    <property type="term" value="F:zinc ion binding"/>
    <property type="evidence" value="ECO:0007669"/>
    <property type="project" value="UniProtKB-UniRule"/>
</dbReference>
<dbReference type="GO" id="GO:0006508">
    <property type="term" value="P:proteolysis"/>
    <property type="evidence" value="ECO:0007669"/>
    <property type="project" value="UniProtKB-KW"/>
</dbReference>
<dbReference type="CDD" id="cd07338">
    <property type="entry name" value="M48B_HtpX_like"/>
    <property type="match status" value="1"/>
</dbReference>
<dbReference type="Gene3D" id="3.30.2010.10">
    <property type="entry name" value="Metalloproteases ('zincins'), catalytic domain"/>
    <property type="match status" value="1"/>
</dbReference>
<dbReference type="HAMAP" id="MF_00188">
    <property type="entry name" value="Pept_M48_protease_HtpX"/>
    <property type="match status" value="1"/>
</dbReference>
<dbReference type="InterPro" id="IPR050083">
    <property type="entry name" value="HtpX_protease"/>
</dbReference>
<dbReference type="InterPro" id="IPR022919">
    <property type="entry name" value="Pept_M48_protease_HtpX"/>
</dbReference>
<dbReference type="InterPro" id="IPR001915">
    <property type="entry name" value="Peptidase_M48"/>
</dbReference>
<dbReference type="PANTHER" id="PTHR43221">
    <property type="entry name" value="PROTEASE HTPX"/>
    <property type="match status" value="1"/>
</dbReference>
<dbReference type="PANTHER" id="PTHR43221:SF2">
    <property type="entry name" value="PROTEASE HTPX HOMOLOG"/>
    <property type="match status" value="1"/>
</dbReference>
<dbReference type="Pfam" id="PF01435">
    <property type="entry name" value="Peptidase_M48"/>
    <property type="match status" value="1"/>
</dbReference>
<dbReference type="PROSITE" id="PS00142">
    <property type="entry name" value="ZINC_PROTEASE"/>
    <property type="match status" value="1"/>
</dbReference>
<sequence>MFPIFDPVALGLYIVGYIFMLIIAATIAPKVAKSISGRFTLYGAMALTAVLVVLTTAFIIYLFVTVALPHMGAYGLSFLLGLIFFVVLMNIITYFASPYLINLSYGARPDPRLQQIVDEVAARLGAPFKLKAVVVDGPPNAFAYGNFLTGRYVAVTSSMLALTDRRELEAVIGHEIGHHLHRDNAIMLLFGILPSIVYYLGVTAVHMAMASSGNRGGNPAILAAVGIAAVIVSFLIQLLVLAFSRLREYYADTAGAKAAGKEAMQFALAKIHKFYFANPEAHEVVRDSKFRALFIYALVNAVANPFVSVTRSDLEEIKRSSYSVFQEIFSTHPPIPKRLKFLDELQF</sequence>
<protein>
    <recommendedName>
        <fullName evidence="1">Protease HtpX homolog</fullName>
        <ecNumber evidence="1">3.4.24.-</ecNumber>
    </recommendedName>
</protein>
<proteinExistence type="inferred from homology"/>
<gene>
    <name evidence="1" type="primary">htpX</name>
    <name type="ordered locus">PAE3461</name>
</gene>
<accession>Q8ZT30</accession>
<keyword id="KW-1003">Cell membrane</keyword>
<keyword id="KW-0378">Hydrolase</keyword>
<keyword id="KW-0472">Membrane</keyword>
<keyword id="KW-0479">Metal-binding</keyword>
<keyword id="KW-0482">Metalloprotease</keyword>
<keyword id="KW-0645">Protease</keyword>
<keyword id="KW-1185">Reference proteome</keyword>
<keyword id="KW-0812">Transmembrane</keyword>
<keyword id="KW-1133">Transmembrane helix</keyword>
<keyword id="KW-0862">Zinc</keyword>
<reference key="1">
    <citation type="journal article" date="2002" name="Proc. Natl. Acad. Sci. U.S.A.">
        <title>Genome sequence of the hyperthermophilic crenarchaeon Pyrobaculum aerophilum.</title>
        <authorList>
            <person name="Fitz-Gibbon S.T."/>
            <person name="Ladner H."/>
            <person name="Kim U.-J."/>
            <person name="Stetter K.O."/>
            <person name="Simon M.I."/>
            <person name="Miller J.H."/>
        </authorList>
    </citation>
    <scope>NUCLEOTIDE SEQUENCE [LARGE SCALE GENOMIC DNA]</scope>
    <source>
        <strain>ATCC 51768 / DSM 7523 / JCM 9630 / CIP 104966 / NBRC 100827 / IM2</strain>
    </source>
</reference>
<organism>
    <name type="scientific">Pyrobaculum aerophilum (strain ATCC 51768 / DSM 7523 / JCM 9630 / CIP 104966 / NBRC 100827 / IM2)</name>
    <dbReference type="NCBI Taxonomy" id="178306"/>
    <lineage>
        <taxon>Archaea</taxon>
        <taxon>Thermoproteota</taxon>
        <taxon>Thermoprotei</taxon>
        <taxon>Thermoproteales</taxon>
        <taxon>Thermoproteaceae</taxon>
        <taxon>Pyrobaculum</taxon>
    </lineage>
</organism>